<dbReference type="EMBL" id="L57504">
    <property type="protein sequence ID" value="AAB04678.1"/>
    <property type="molecule type" value="Genomic_DNA"/>
</dbReference>
<dbReference type="EMBL" id="Y07826">
    <property type="protein sequence ID" value="CAA69161.1"/>
    <property type="molecule type" value="Genomic_DNA"/>
</dbReference>
<dbReference type="EMBL" id="D84222">
    <property type="protein sequence ID" value="BAA12282.1"/>
    <property type="molecule type" value="Genomic_DNA"/>
</dbReference>
<dbReference type="EMBL" id="AB012390">
    <property type="protein sequence ID" value="BAA81743.1"/>
    <property type="molecule type" value="Genomic_DNA"/>
</dbReference>
<dbReference type="EMBL" id="AB032368">
    <property type="protein sequence ID" value="BAA96087.1"/>
    <property type="molecule type" value="Genomic_DNA"/>
</dbReference>
<dbReference type="EMBL" id="AP008226">
    <property type="protein sequence ID" value="BAD71312.1"/>
    <property type="molecule type" value="Genomic_DNA"/>
</dbReference>
<dbReference type="RefSeq" id="WP_011228713.1">
    <property type="nucleotide sequence ID" value="NC_006461.1"/>
</dbReference>
<dbReference type="RefSeq" id="YP_144755.1">
    <property type="nucleotide sequence ID" value="NC_006461.1"/>
</dbReference>
<dbReference type="PDB" id="4J7Z">
    <property type="method" value="Other"/>
    <property type="resolution" value="1.64 A"/>
    <property type="chains" value="A/B/C/D/E/F=2-114"/>
</dbReference>
<dbReference type="PDB" id="4J80">
    <property type="method" value="Other"/>
    <property type="resolution" value="2.90 A"/>
    <property type="chains" value="A/B/C/D=1-280"/>
</dbReference>
<dbReference type="PDB" id="6PPT">
    <property type="method" value="NMR"/>
    <property type="chains" value="A=116-183"/>
</dbReference>
<dbReference type="PDB" id="6PQ2">
    <property type="method" value="NMR"/>
    <property type="chains" value="A=116-183"/>
</dbReference>
<dbReference type="PDB" id="6PQE">
    <property type="method" value="NMR"/>
    <property type="chains" value="A=191-256"/>
</dbReference>
<dbReference type="PDB" id="6PRI">
    <property type="method" value="NMR"/>
    <property type="chains" value="A=192-256"/>
</dbReference>
<dbReference type="PDB" id="6PRJ">
    <property type="method" value="NMR"/>
    <property type="chains" value="A=191-256"/>
</dbReference>
<dbReference type="PDB" id="6PRP">
    <property type="method" value="NMR"/>
    <property type="chains" value="A=190-256"/>
</dbReference>
<dbReference type="PDB" id="6PRQ">
    <property type="method" value="NMR"/>
    <property type="chains" value="A=116-256"/>
</dbReference>
<dbReference type="PDB" id="6PSI">
    <property type="method" value="NMR"/>
    <property type="chains" value="A/C=1-280"/>
</dbReference>
<dbReference type="PDBsum" id="4J7Z"/>
<dbReference type="PDBsum" id="4J80"/>
<dbReference type="PDBsum" id="6PPT"/>
<dbReference type="PDBsum" id="6PQ2"/>
<dbReference type="PDBsum" id="6PQE"/>
<dbReference type="PDBsum" id="6PRI"/>
<dbReference type="PDBsum" id="6PRJ"/>
<dbReference type="PDBsum" id="6PRP"/>
<dbReference type="PDBsum" id="6PRQ"/>
<dbReference type="PDBsum" id="6PSI"/>
<dbReference type="SMR" id="Q56237"/>
<dbReference type="EnsemblBacteria" id="BAD71312">
    <property type="protein sequence ID" value="BAD71312"/>
    <property type="gene ID" value="BAD71312"/>
</dbReference>
<dbReference type="GeneID" id="3170135"/>
<dbReference type="KEGG" id="ttj:TTHA1489"/>
<dbReference type="PATRIC" id="fig|300852.9.peg.1464"/>
<dbReference type="eggNOG" id="COG0484">
    <property type="taxonomic scope" value="Bacteria"/>
</dbReference>
<dbReference type="HOGENOM" id="CLU_017633_0_0_0"/>
<dbReference type="PhylomeDB" id="Q56237"/>
<dbReference type="EvolutionaryTrace" id="Q56237"/>
<dbReference type="Proteomes" id="UP000000532">
    <property type="component" value="Chromosome"/>
</dbReference>
<dbReference type="GO" id="GO:0005737">
    <property type="term" value="C:cytoplasm"/>
    <property type="evidence" value="ECO:0007669"/>
    <property type="project" value="UniProtKB-SubCell"/>
</dbReference>
<dbReference type="GO" id="GO:0051082">
    <property type="term" value="F:unfolded protein binding"/>
    <property type="evidence" value="ECO:0007669"/>
    <property type="project" value="InterPro"/>
</dbReference>
<dbReference type="GO" id="GO:0051085">
    <property type="term" value="P:chaperone cofactor-dependent protein refolding"/>
    <property type="evidence" value="ECO:0007669"/>
    <property type="project" value="TreeGrafter"/>
</dbReference>
<dbReference type="GO" id="GO:0006260">
    <property type="term" value="P:DNA replication"/>
    <property type="evidence" value="ECO:0007669"/>
    <property type="project" value="UniProtKB-KW"/>
</dbReference>
<dbReference type="GO" id="GO:0042026">
    <property type="term" value="P:protein refolding"/>
    <property type="evidence" value="ECO:0007669"/>
    <property type="project" value="TreeGrafter"/>
</dbReference>
<dbReference type="CDD" id="cd06257">
    <property type="entry name" value="DnaJ"/>
    <property type="match status" value="1"/>
</dbReference>
<dbReference type="CDD" id="cd10747">
    <property type="entry name" value="DnaJ_C"/>
    <property type="match status" value="1"/>
</dbReference>
<dbReference type="FunFam" id="1.10.287.110:FF:000034">
    <property type="entry name" value="Chaperone protein DnaJ"/>
    <property type="match status" value="1"/>
</dbReference>
<dbReference type="FunFam" id="2.60.260.20:FF:000013">
    <property type="entry name" value="DnaJ subfamily B member 11"/>
    <property type="match status" value="1"/>
</dbReference>
<dbReference type="Gene3D" id="1.10.287.110">
    <property type="entry name" value="DnaJ domain"/>
    <property type="match status" value="1"/>
</dbReference>
<dbReference type="Gene3D" id="2.60.260.20">
    <property type="entry name" value="Urease metallochaperone UreE, N-terminal domain"/>
    <property type="match status" value="2"/>
</dbReference>
<dbReference type="InterPro" id="IPR002939">
    <property type="entry name" value="DnaJ_C"/>
</dbReference>
<dbReference type="InterPro" id="IPR001623">
    <property type="entry name" value="DnaJ_domain"/>
</dbReference>
<dbReference type="InterPro" id="IPR018253">
    <property type="entry name" value="DnaJ_domain_CS"/>
</dbReference>
<dbReference type="InterPro" id="IPR008971">
    <property type="entry name" value="HSP40/DnaJ_pept-bd"/>
</dbReference>
<dbReference type="InterPro" id="IPR036869">
    <property type="entry name" value="J_dom_sf"/>
</dbReference>
<dbReference type="NCBIfam" id="NF010892">
    <property type="entry name" value="PRK14299.1"/>
    <property type="match status" value="1"/>
</dbReference>
<dbReference type="PANTHER" id="PTHR43096">
    <property type="entry name" value="DNAJ HOMOLOG 1, MITOCHONDRIAL-RELATED"/>
    <property type="match status" value="1"/>
</dbReference>
<dbReference type="PANTHER" id="PTHR43096:SF52">
    <property type="entry name" value="DNAJ HOMOLOG 1, MITOCHONDRIAL-RELATED"/>
    <property type="match status" value="1"/>
</dbReference>
<dbReference type="Pfam" id="PF00226">
    <property type="entry name" value="DnaJ"/>
    <property type="match status" value="1"/>
</dbReference>
<dbReference type="Pfam" id="PF01556">
    <property type="entry name" value="DnaJ_C"/>
    <property type="match status" value="1"/>
</dbReference>
<dbReference type="PRINTS" id="PR00625">
    <property type="entry name" value="JDOMAIN"/>
</dbReference>
<dbReference type="SMART" id="SM00271">
    <property type="entry name" value="DnaJ"/>
    <property type="match status" value="1"/>
</dbReference>
<dbReference type="SUPFAM" id="SSF46565">
    <property type="entry name" value="Chaperone J-domain"/>
    <property type="match status" value="1"/>
</dbReference>
<dbReference type="SUPFAM" id="SSF49493">
    <property type="entry name" value="HSP40/DnaJ peptide-binding domain"/>
    <property type="match status" value="2"/>
</dbReference>
<dbReference type="PROSITE" id="PS00636">
    <property type="entry name" value="DNAJ_1"/>
    <property type="match status" value="1"/>
</dbReference>
<dbReference type="PROSITE" id="PS50076">
    <property type="entry name" value="DNAJ_2"/>
    <property type="match status" value="1"/>
</dbReference>
<protein>
    <recommendedName>
        <fullName>Chaperone protein DnaJ 2</fullName>
    </recommendedName>
</protein>
<reference key="1">
    <citation type="journal article" date="1997" name="Biochim. Biophys. Acta">
        <title>Cloning, sequencing, and expression of dnaK-operon proteins from the thermophilic bacterium Thermus thermophilus.</title>
        <authorList>
            <person name="Osipiuk J."/>
            <person name="Joachimiak A."/>
        </authorList>
    </citation>
    <scope>NUCLEOTIDE SEQUENCE [GENOMIC DNA]</scope>
</reference>
<reference key="2">
    <citation type="submission" date="1996-09" db="EMBL/GenBank/DDBJ databases">
        <authorList>
            <person name="Seidel R."/>
        </authorList>
    </citation>
    <scope>NUCLEOTIDE SEQUENCE [GENOMIC DNA]</scope>
</reference>
<reference key="3">
    <citation type="journal article" date="1997" name="FEBS Lett.">
        <title>K+ is an indispensable cofactor for GrpE stimulation of ATPase activity of DnaK/DnaJ complex from Thermus thermophilus.</title>
        <authorList>
            <person name="Motohashi K."/>
            <person name="Yohda M."/>
            <person name="Odaka M."/>
            <person name="Yoshida M."/>
        </authorList>
    </citation>
    <scope>NUCLEOTIDE SEQUENCE [GENOMIC DNA]</scope>
</reference>
<reference key="4">
    <citation type="submission" date="2004-11" db="EMBL/GenBank/DDBJ databases">
        <title>Complete genome sequence of Thermus thermophilus HB8.</title>
        <authorList>
            <person name="Masui R."/>
            <person name="Kurokawa K."/>
            <person name="Nakagawa N."/>
            <person name="Tokunaga F."/>
            <person name="Koyama Y."/>
            <person name="Shibata T."/>
            <person name="Oshima T."/>
            <person name="Yokoyama S."/>
            <person name="Yasunaga T."/>
            <person name="Kuramitsu S."/>
        </authorList>
    </citation>
    <scope>NUCLEOTIDE SEQUENCE [LARGE SCALE GENOMIC DNA]</scope>
    <source>
        <strain>ATCC 27634 / DSM 579 / HB8</strain>
    </source>
</reference>
<reference key="5">
    <citation type="journal article" date="1999" name="J. Mol. Biol.">
        <title>The functional cycle and regulation of the Thermus thermophilus DnaK chaperone system.</title>
        <authorList>
            <person name="Klostermeier D."/>
            <person name="Seidel R."/>
            <person name="Reinstein J."/>
        </authorList>
    </citation>
    <scope>FUNCTION</scope>
</reference>
<evidence type="ECO:0000250" key="1"/>
<evidence type="ECO:0000255" key="2">
    <source>
        <dbReference type="PROSITE-ProRule" id="PRU00286"/>
    </source>
</evidence>
<evidence type="ECO:0000269" key="3">
    <source>
    </source>
</evidence>
<evidence type="ECO:0000305" key="4"/>
<evidence type="ECO:0007829" key="5">
    <source>
        <dbReference type="PDB" id="6PPT"/>
    </source>
</evidence>
<evidence type="ECO:0007829" key="6">
    <source>
        <dbReference type="PDB" id="6PQE"/>
    </source>
</evidence>
<evidence type="ECO:0007829" key="7">
    <source>
        <dbReference type="PDB" id="6PRQ"/>
    </source>
</evidence>
<evidence type="ECO:0007829" key="8">
    <source>
        <dbReference type="PDB" id="6PSI"/>
    </source>
</evidence>
<name>DNAJ2_THET8</name>
<comment type="function">
    <text evidence="3">Does not influence ATP binding or hydrolysis nor ADP release. Exerts influence on the interaction of DnaK with substrates; in the presence of DafA, DnaJ inhibits substrate binding, and substrate already bound to DnaK is displaced by DnaJ and DafA.</text>
</comment>
<comment type="subunit">
    <text>Forms a heterononamer with DnaJ and DafA in the resting state. Three copies of each protein are present in the complex.</text>
</comment>
<comment type="subcellular location">
    <subcellularLocation>
        <location evidence="1">Cytoplasm</location>
    </subcellularLocation>
</comment>
<comment type="similarity">
    <text evidence="4">Belongs to the DnaJ family.</text>
</comment>
<gene>
    <name type="primary">dnaJ2</name>
    <name type="ordered locus">TTHA1489</name>
</gene>
<keyword id="KW-0002">3D-structure</keyword>
<keyword id="KW-0143">Chaperone</keyword>
<keyword id="KW-0963">Cytoplasm</keyword>
<keyword id="KW-0235">DNA replication</keyword>
<keyword id="KW-1185">Reference proteome</keyword>
<keyword id="KW-0346">Stress response</keyword>
<organism>
    <name type="scientific">Thermus thermophilus (strain ATCC 27634 / DSM 579 / HB8)</name>
    <dbReference type="NCBI Taxonomy" id="300852"/>
    <lineage>
        <taxon>Bacteria</taxon>
        <taxon>Thermotogati</taxon>
        <taxon>Deinococcota</taxon>
        <taxon>Deinococci</taxon>
        <taxon>Thermales</taxon>
        <taxon>Thermaceae</taxon>
        <taxon>Thermus</taxon>
    </lineage>
</organism>
<sequence>MAAKKDYYAILGVPRNATQEEIKRAYKRLARQYHPDVNKSPEAEEKFKEINEAYAVLSDPEKRRIYDTYGTTEAPPPPPPGGYDFSGFDVEDFSEFFQELFGPGLFGGFGRRSRKGRDLRAELPLTLEEAFHGGERVVEVAGRRVSVRIPPGVREGSVIRVPGMGGQGNPPGDLLLVVRLLPHPVFRLEGQDLYATLDVPAPIAVVGGKVRAMTLEGPVEVAVPPRTQAGRKLRLKGKGFPGPAGRGDLYLEVRITIPERLTPEEEALWKKLAEAYYARA</sequence>
<accession>Q56237</accession>
<accession>P77642</accession>
<accession>Q5SI85</accession>
<proteinExistence type="evidence at protein level"/>
<feature type="chain" id="PRO_0000070921" description="Chaperone protein DnaJ 2">
    <location>
        <begin position="1"/>
        <end position="280"/>
    </location>
</feature>
<feature type="domain" description="J" evidence="2">
    <location>
        <begin position="6"/>
        <end position="70"/>
    </location>
</feature>
<feature type="sequence conflict" description="In Ref. 1; AAB04678." evidence="4" ref="1">
    <original>E</original>
    <variation>K</variation>
    <location>
        <position position="129"/>
    </location>
</feature>
<feature type="helix" evidence="8">
    <location>
        <begin position="7"/>
        <end position="11"/>
    </location>
</feature>
<feature type="helix" evidence="8">
    <location>
        <begin position="19"/>
        <end position="32"/>
    </location>
</feature>
<feature type="turn" evidence="8">
    <location>
        <begin position="35"/>
        <end position="37"/>
    </location>
</feature>
<feature type="helix" evidence="8">
    <location>
        <begin position="41"/>
        <end position="58"/>
    </location>
</feature>
<feature type="helix" evidence="8">
    <location>
        <begin position="60"/>
        <end position="68"/>
    </location>
</feature>
<feature type="helix" evidence="8">
    <location>
        <begin position="90"/>
        <end position="92"/>
    </location>
</feature>
<feature type="helix" evidence="8">
    <location>
        <begin position="95"/>
        <end position="100"/>
    </location>
</feature>
<feature type="helix" evidence="8">
    <location>
        <begin position="102"/>
        <end position="104"/>
    </location>
</feature>
<feature type="turn" evidence="8">
    <location>
        <begin position="108"/>
        <end position="110"/>
    </location>
</feature>
<feature type="strand" evidence="5">
    <location>
        <begin position="119"/>
        <end position="124"/>
    </location>
</feature>
<feature type="helix" evidence="5">
    <location>
        <begin position="127"/>
        <end position="132"/>
    </location>
</feature>
<feature type="strand" evidence="5">
    <location>
        <begin position="135"/>
        <end position="140"/>
    </location>
</feature>
<feature type="strand" evidence="5">
    <location>
        <begin position="143"/>
        <end position="148"/>
    </location>
</feature>
<feature type="strand" evidence="5">
    <location>
        <begin position="158"/>
        <end position="162"/>
    </location>
</feature>
<feature type="strand" evidence="5">
    <location>
        <begin position="164"/>
        <end position="166"/>
    </location>
</feature>
<feature type="strand" evidence="5">
    <location>
        <begin position="168"/>
        <end position="170"/>
    </location>
</feature>
<feature type="strand" evidence="5">
    <location>
        <begin position="173"/>
        <end position="179"/>
    </location>
</feature>
<feature type="strand" evidence="7">
    <location>
        <begin position="187"/>
        <end position="189"/>
    </location>
</feature>
<feature type="strand" evidence="6">
    <location>
        <begin position="193"/>
        <end position="200"/>
    </location>
</feature>
<feature type="helix" evidence="6">
    <location>
        <begin position="201"/>
        <end position="206"/>
    </location>
</feature>
<feature type="strand" evidence="6">
    <location>
        <begin position="209"/>
        <end position="213"/>
    </location>
</feature>
<feature type="strand" evidence="6">
    <location>
        <begin position="215"/>
        <end position="222"/>
    </location>
</feature>
<feature type="strand" evidence="6">
    <location>
        <begin position="232"/>
        <end position="242"/>
    </location>
</feature>
<feature type="strand" evidence="6">
    <location>
        <begin position="245"/>
        <end position="256"/>
    </location>
</feature>
<feature type="helix" evidence="8">
    <location>
        <begin position="263"/>
        <end position="277"/>
    </location>
</feature>